<name>LIPA_AZOSB</name>
<evidence type="ECO:0000255" key="1">
    <source>
        <dbReference type="HAMAP-Rule" id="MF_00206"/>
    </source>
</evidence>
<evidence type="ECO:0000255" key="2">
    <source>
        <dbReference type="PROSITE-ProRule" id="PRU01266"/>
    </source>
</evidence>
<comment type="function">
    <text evidence="1">Catalyzes the radical-mediated insertion of two sulfur atoms into the C-6 and C-8 positions of the octanoyl moiety bound to the lipoyl domains of lipoate-dependent enzymes, thereby converting the octanoylated domains into lipoylated derivatives.</text>
</comment>
<comment type="catalytic activity">
    <reaction evidence="1">
        <text>[[Fe-S] cluster scaffold protein carrying a second [4Fe-4S](2+) cluster] + N(6)-octanoyl-L-lysyl-[protein] + 2 oxidized [2Fe-2S]-[ferredoxin] + 2 S-adenosyl-L-methionine + 4 H(+) = [[Fe-S] cluster scaffold protein] + N(6)-[(R)-dihydrolipoyl]-L-lysyl-[protein] + 4 Fe(3+) + 2 hydrogen sulfide + 2 5'-deoxyadenosine + 2 L-methionine + 2 reduced [2Fe-2S]-[ferredoxin]</text>
        <dbReference type="Rhea" id="RHEA:16585"/>
        <dbReference type="Rhea" id="RHEA-COMP:9928"/>
        <dbReference type="Rhea" id="RHEA-COMP:10000"/>
        <dbReference type="Rhea" id="RHEA-COMP:10001"/>
        <dbReference type="Rhea" id="RHEA-COMP:10475"/>
        <dbReference type="Rhea" id="RHEA-COMP:14568"/>
        <dbReference type="Rhea" id="RHEA-COMP:14569"/>
        <dbReference type="ChEBI" id="CHEBI:15378"/>
        <dbReference type="ChEBI" id="CHEBI:17319"/>
        <dbReference type="ChEBI" id="CHEBI:29034"/>
        <dbReference type="ChEBI" id="CHEBI:29919"/>
        <dbReference type="ChEBI" id="CHEBI:33722"/>
        <dbReference type="ChEBI" id="CHEBI:33737"/>
        <dbReference type="ChEBI" id="CHEBI:33738"/>
        <dbReference type="ChEBI" id="CHEBI:57844"/>
        <dbReference type="ChEBI" id="CHEBI:59789"/>
        <dbReference type="ChEBI" id="CHEBI:78809"/>
        <dbReference type="ChEBI" id="CHEBI:83100"/>
        <dbReference type="EC" id="2.8.1.8"/>
    </reaction>
</comment>
<comment type="cofactor">
    <cofactor evidence="1">
        <name>[4Fe-4S] cluster</name>
        <dbReference type="ChEBI" id="CHEBI:49883"/>
    </cofactor>
    <text evidence="1">Binds 2 [4Fe-4S] clusters per subunit. One cluster is coordinated with 3 cysteines and an exchangeable S-adenosyl-L-methionine.</text>
</comment>
<comment type="pathway">
    <text evidence="1">Protein modification; protein lipoylation via endogenous pathway; protein N(6)-(lipoyl)lysine from octanoyl-[acyl-carrier-protein]: step 2/2.</text>
</comment>
<comment type="subcellular location">
    <subcellularLocation>
        <location evidence="1">Cytoplasm</location>
    </subcellularLocation>
</comment>
<comment type="similarity">
    <text evidence="1">Belongs to the radical SAM superfamily. Lipoyl synthase family.</text>
</comment>
<organism>
    <name type="scientific">Azoarcus sp. (strain BH72)</name>
    <dbReference type="NCBI Taxonomy" id="418699"/>
    <lineage>
        <taxon>Bacteria</taxon>
        <taxon>Pseudomonadati</taxon>
        <taxon>Pseudomonadota</taxon>
        <taxon>Betaproteobacteria</taxon>
        <taxon>Rhodocyclales</taxon>
        <taxon>Zoogloeaceae</taxon>
        <taxon>Azoarcus</taxon>
    </lineage>
</organism>
<proteinExistence type="inferred from homology"/>
<reference key="1">
    <citation type="journal article" date="2006" name="Nat. Biotechnol.">
        <title>Complete genome of the mutualistic, N2-fixing grass endophyte Azoarcus sp. strain BH72.</title>
        <authorList>
            <person name="Krause A."/>
            <person name="Ramakumar A."/>
            <person name="Bartels D."/>
            <person name="Battistoni F."/>
            <person name="Bekel T."/>
            <person name="Boch J."/>
            <person name="Boehm M."/>
            <person name="Friedrich F."/>
            <person name="Hurek T."/>
            <person name="Krause L."/>
            <person name="Linke B."/>
            <person name="McHardy A.C."/>
            <person name="Sarkar A."/>
            <person name="Schneiker S."/>
            <person name="Syed A.A."/>
            <person name="Thauer R."/>
            <person name="Vorhoelter F.-J."/>
            <person name="Weidner S."/>
            <person name="Puehler A."/>
            <person name="Reinhold-Hurek B."/>
            <person name="Kaiser O."/>
            <person name="Goesmann A."/>
        </authorList>
    </citation>
    <scope>NUCLEOTIDE SEQUENCE [LARGE SCALE GENOMIC DNA]</scope>
    <source>
        <strain>BH72</strain>
    </source>
</reference>
<accession>A1K1U7</accession>
<gene>
    <name evidence="1" type="primary">lipA</name>
    <name type="ordered locus">azo0184</name>
</gene>
<sequence length="315" mass="35336">MDNPARKQRGAEKTARIPIKIVPAERLKKPDWIRIRLGAGAEAERFNEIKQTLREHKLHTVCEEASCPNIHECFGKGTATFMIMGDICTRRCPFCDVGHGRPEPLNPNEPTDLARTIAAMRLNYVVITSVDRDDLRDGGAQHFVDCIRETRAASPSTTIEVLVPDFRGRMEIALEIFNQAPPDVMNHNMETVPRLYKQARPGADYAYSLRLLKEFKAGHPDVLTKSGLMVGLGETDDEILDVMRDLRAHDVDMLTIGQYLQPSGGHLPVLRYVHPDTFKMFETEALRMGFRNAACGPMVRSSYWADQQAHGAGVV</sequence>
<feature type="chain" id="PRO_0000325229" description="Lipoyl synthase">
    <location>
        <begin position="1"/>
        <end position="315"/>
    </location>
</feature>
<feature type="domain" description="Radical SAM core" evidence="2">
    <location>
        <begin position="74"/>
        <end position="291"/>
    </location>
</feature>
<feature type="binding site" evidence="1">
    <location>
        <position position="62"/>
    </location>
    <ligand>
        <name>[4Fe-4S] cluster</name>
        <dbReference type="ChEBI" id="CHEBI:49883"/>
        <label>1</label>
    </ligand>
</feature>
<feature type="binding site" evidence="1">
    <location>
        <position position="67"/>
    </location>
    <ligand>
        <name>[4Fe-4S] cluster</name>
        <dbReference type="ChEBI" id="CHEBI:49883"/>
        <label>1</label>
    </ligand>
</feature>
<feature type="binding site" evidence="1">
    <location>
        <position position="73"/>
    </location>
    <ligand>
        <name>[4Fe-4S] cluster</name>
        <dbReference type="ChEBI" id="CHEBI:49883"/>
        <label>1</label>
    </ligand>
</feature>
<feature type="binding site" evidence="1">
    <location>
        <position position="88"/>
    </location>
    <ligand>
        <name>[4Fe-4S] cluster</name>
        <dbReference type="ChEBI" id="CHEBI:49883"/>
        <label>2</label>
        <note>4Fe-4S-S-AdoMet</note>
    </ligand>
</feature>
<feature type="binding site" evidence="1">
    <location>
        <position position="92"/>
    </location>
    <ligand>
        <name>[4Fe-4S] cluster</name>
        <dbReference type="ChEBI" id="CHEBI:49883"/>
        <label>2</label>
        <note>4Fe-4S-S-AdoMet</note>
    </ligand>
</feature>
<feature type="binding site" evidence="1">
    <location>
        <position position="95"/>
    </location>
    <ligand>
        <name>[4Fe-4S] cluster</name>
        <dbReference type="ChEBI" id="CHEBI:49883"/>
        <label>2</label>
        <note>4Fe-4S-S-AdoMet</note>
    </ligand>
</feature>
<feature type="binding site" evidence="1">
    <location>
        <position position="302"/>
    </location>
    <ligand>
        <name>[4Fe-4S] cluster</name>
        <dbReference type="ChEBI" id="CHEBI:49883"/>
        <label>1</label>
    </ligand>
</feature>
<protein>
    <recommendedName>
        <fullName evidence="1">Lipoyl synthase</fullName>
        <ecNumber evidence="1">2.8.1.8</ecNumber>
    </recommendedName>
    <alternativeName>
        <fullName evidence="1">Lip-syn</fullName>
        <shortName evidence="1">LS</shortName>
    </alternativeName>
    <alternativeName>
        <fullName evidence="1">Lipoate synthase</fullName>
    </alternativeName>
    <alternativeName>
        <fullName evidence="1">Lipoic acid synthase</fullName>
    </alternativeName>
    <alternativeName>
        <fullName evidence="1">Sulfur insertion protein LipA</fullName>
    </alternativeName>
</protein>
<dbReference type="EC" id="2.8.1.8" evidence="1"/>
<dbReference type="EMBL" id="AM406670">
    <property type="protein sequence ID" value="CAL92802.1"/>
    <property type="molecule type" value="Genomic_DNA"/>
</dbReference>
<dbReference type="RefSeq" id="WP_011763920.1">
    <property type="nucleotide sequence ID" value="NC_008702.1"/>
</dbReference>
<dbReference type="SMR" id="A1K1U7"/>
<dbReference type="STRING" id="62928.azo0184"/>
<dbReference type="KEGG" id="aoa:dqs_0193"/>
<dbReference type="KEGG" id="azo:azo0184"/>
<dbReference type="eggNOG" id="COG0320">
    <property type="taxonomic scope" value="Bacteria"/>
</dbReference>
<dbReference type="HOGENOM" id="CLU_033144_2_1_4"/>
<dbReference type="OrthoDB" id="9787898at2"/>
<dbReference type="UniPathway" id="UPA00538">
    <property type="reaction ID" value="UER00593"/>
</dbReference>
<dbReference type="Proteomes" id="UP000002588">
    <property type="component" value="Chromosome"/>
</dbReference>
<dbReference type="GO" id="GO:0005737">
    <property type="term" value="C:cytoplasm"/>
    <property type="evidence" value="ECO:0007669"/>
    <property type="project" value="UniProtKB-SubCell"/>
</dbReference>
<dbReference type="GO" id="GO:0051539">
    <property type="term" value="F:4 iron, 4 sulfur cluster binding"/>
    <property type="evidence" value="ECO:0007669"/>
    <property type="project" value="UniProtKB-UniRule"/>
</dbReference>
<dbReference type="GO" id="GO:0016992">
    <property type="term" value="F:lipoate synthase activity"/>
    <property type="evidence" value="ECO:0007669"/>
    <property type="project" value="UniProtKB-UniRule"/>
</dbReference>
<dbReference type="GO" id="GO:0046872">
    <property type="term" value="F:metal ion binding"/>
    <property type="evidence" value="ECO:0007669"/>
    <property type="project" value="UniProtKB-KW"/>
</dbReference>
<dbReference type="CDD" id="cd01335">
    <property type="entry name" value="Radical_SAM"/>
    <property type="match status" value="1"/>
</dbReference>
<dbReference type="FunFam" id="3.20.20.70:FF:000040">
    <property type="entry name" value="Lipoyl synthase"/>
    <property type="match status" value="1"/>
</dbReference>
<dbReference type="Gene3D" id="3.20.20.70">
    <property type="entry name" value="Aldolase class I"/>
    <property type="match status" value="1"/>
</dbReference>
<dbReference type="HAMAP" id="MF_00206">
    <property type="entry name" value="Lipoyl_synth"/>
    <property type="match status" value="1"/>
</dbReference>
<dbReference type="InterPro" id="IPR013785">
    <property type="entry name" value="Aldolase_TIM"/>
</dbReference>
<dbReference type="InterPro" id="IPR006638">
    <property type="entry name" value="Elp3/MiaA/NifB-like_rSAM"/>
</dbReference>
<dbReference type="InterPro" id="IPR031691">
    <property type="entry name" value="LIAS_N"/>
</dbReference>
<dbReference type="InterPro" id="IPR003698">
    <property type="entry name" value="Lipoyl_synth"/>
</dbReference>
<dbReference type="InterPro" id="IPR007197">
    <property type="entry name" value="rSAM"/>
</dbReference>
<dbReference type="NCBIfam" id="TIGR00510">
    <property type="entry name" value="lipA"/>
    <property type="match status" value="1"/>
</dbReference>
<dbReference type="NCBIfam" id="NF004019">
    <property type="entry name" value="PRK05481.1"/>
    <property type="match status" value="1"/>
</dbReference>
<dbReference type="NCBIfam" id="NF009544">
    <property type="entry name" value="PRK12928.1"/>
    <property type="match status" value="1"/>
</dbReference>
<dbReference type="PANTHER" id="PTHR10949">
    <property type="entry name" value="LIPOYL SYNTHASE"/>
    <property type="match status" value="1"/>
</dbReference>
<dbReference type="PANTHER" id="PTHR10949:SF0">
    <property type="entry name" value="LIPOYL SYNTHASE, MITOCHONDRIAL"/>
    <property type="match status" value="1"/>
</dbReference>
<dbReference type="Pfam" id="PF16881">
    <property type="entry name" value="LIAS_N"/>
    <property type="match status" value="1"/>
</dbReference>
<dbReference type="Pfam" id="PF04055">
    <property type="entry name" value="Radical_SAM"/>
    <property type="match status" value="1"/>
</dbReference>
<dbReference type="PIRSF" id="PIRSF005963">
    <property type="entry name" value="Lipoyl_synth"/>
    <property type="match status" value="1"/>
</dbReference>
<dbReference type="SFLD" id="SFLDF00271">
    <property type="entry name" value="lipoyl_synthase"/>
    <property type="match status" value="1"/>
</dbReference>
<dbReference type="SFLD" id="SFLDG01058">
    <property type="entry name" value="lipoyl_synthase_like"/>
    <property type="match status" value="1"/>
</dbReference>
<dbReference type="SMART" id="SM00729">
    <property type="entry name" value="Elp3"/>
    <property type="match status" value="1"/>
</dbReference>
<dbReference type="SUPFAM" id="SSF102114">
    <property type="entry name" value="Radical SAM enzymes"/>
    <property type="match status" value="1"/>
</dbReference>
<dbReference type="PROSITE" id="PS51918">
    <property type="entry name" value="RADICAL_SAM"/>
    <property type="match status" value="1"/>
</dbReference>
<keyword id="KW-0004">4Fe-4S</keyword>
<keyword id="KW-0963">Cytoplasm</keyword>
<keyword id="KW-0408">Iron</keyword>
<keyword id="KW-0411">Iron-sulfur</keyword>
<keyword id="KW-0479">Metal-binding</keyword>
<keyword id="KW-1185">Reference proteome</keyword>
<keyword id="KW-0949">S-adenosyl-L-methionine</keyword>
<keyword id="KW-0808">Transferase</keyword>